<accession>Q2S2K9</accession>
<dbReference type="EC" id="7.1.1.-" evidence="1"/>
<dbReference type="EMBL" id="CP000159">
    <property type="protein sequence ID" value="ABC44081.1"/>
    <property type="molecule type" value="Genomic_DNA"/>
</dbReference>
<dbReference type="RefSeq" id="WP_011404198.1">
    <property type="nucleotide sequence ID" value="NC_007677.1"/>
</dbReference>
<dbReference type="RefSeq" id="YP_445572.1">
    <property type="nucleotide sequence ID" value="NC_007677.1"/>
</dbReference>
<dbReference type="SMR" id="Q2S2K9"/>
<dbReference type="STRING" id="309807.SRU_1448"/>
<dbReference type="EnsemblBacteria" id="ABC44081">
    <property type="protein sequence ID" value="ABC44081"/>
    <property type="gene ID" value="SRU_1448"/>
</dbReference>
<dbReference type="KEGG" id="sru:SRU_1448"/>
<dbReference type="PATRIC" id="fig|309807.25.peg.1503"/>
<dbReference type="eggNOG" id="COG1007">
    <property type="taxonomic scope" value="Bacteria"/>
</dbReference>
<dbReference type="HOGENOM" id="CLU_007100_1_1_10"/>
<dbReference type="OrthoDB" id="9811718at2"/>
<dbReference type="Proteomes" id="UP000008674">
    <property type="component" value="Chromosome"/>
</dbReference>
<dbReference type="GO" id="GO:0005886">
    <property type="term" value="C:plasma membrane"/>
    <property type="evidence" value="ECO:0007669"/>
    <property type="project" value="UniProtKB-SubCell"/>
</dbReference>
<dbReference type="GO" id="GO:0008137">
    <property type="term" value="F:NADH dehydrogenase (ubiquinone) activity"/>
    <property type="evidence" value="ECO:0007669"/>
    <property type="project" value="InterPro"/>
</dbReference>
<dbReference type="GO" id="GO:0050136">
    <property type="term" value="F:NADH:ubiquinone reductase (non-electrogenic) activity"/>
    <property type="evidence" value="ECO:0007669"/>
    <property type="project" value="UniProtKB-UniRule"/>
</dbReference>
<dbReference type="GO" id="GO:0048038">
    <property type="term" value="F:quinone binding"/>
    <property type="evidence" value="ECO:0007669"/>
    <property type="project" value="UniProtKB-KW"/>
</dbReference>
<dbReference type="GO" id="GO:0042773">
    <property type="term" value="P:ATP synthesis coupled electron transport"/>
    <property type="evidence" value="ECO:0007669"/>
    <property type="project" value="InterPro"/>
</dbReference>
<dbReference type="HAMAP" id="MF_00445">
    <property type="entry name" value="NDH1_NuoN_1"/>
    <property type="match status" value="1"/>
</dbReference>
<dbReference type="InterPro" id="IPR010096">
    <property type="entry name" value="NADH-Q_OxRdtase_suN/2"/>
</dbReference>
<dbReference type="InterPro" id="IPR001750">
    <property type="entry name" value="ND/Mrp_TM"/>
</dbReference>
<dbReference type="NCBIfam" id="TIGR01770">
    <property type="entry name" value="NDH_I_N"/>
    <property type="match status" value="1"/>
</dbReference>
<dbReference type="PANTHER" id="PTHR22773">
    <property type="entry name" value="NADH DEHYDROGENASE"/>
    <property type="match status" value="1"/>
</dbReference>
<dbReference type="Pfam" id="PF00361">
    <property type="entry name" value="Proton_antipo_M"/>
    <property type="match status" value="1"/>
</dbReference>
<dbReference type="PRINTS" id="PR01434">
    <property type="entry name" value="NADHDHGNASE5"/>
</dbReference>
<reference key="1">
    <citation type="journal article" date="2005" name="Proc. Natl. Acad. Sci. U.S.A.">
        <title>The genome of Salinibacter ruber: convergence and gene exchange among hyperhalophilic bacteria and archaea.</title>
        <authorList>
            <person name="Mongodin E.F."/>
            <person name="Nelson K.E."/>
            <person name="Daugherty S."/>
            <person name="DeBoy R.T."/>
            <person name="Wister J."/>
            <person name="Khouri H."/>
            <person name="Weidman J."/>
            <person name="Walsh D.A."/>
            <person name="Papke R.T."/>
            <person name="Sanchez Perez G."/>
            <person name="Sharma A.K."/>
            <person name="Nesbo C.L."/>
            <person name="MacLeod D."/>
            <person name="Bapteste E."/>
            <person name="Doolittle W.F."/>
            <person name="Charlebois R.L."/>
            <person name="Legault B."/>
            <person name="Rodriguez-Valera F."/>
        </authorList>
    </citation>
    <scope>NUCLEOTIDE SEQUENCE [LARGE SCALE GENOMIC DNA]</scope>
    <source>
        <strain>DSM 13855 / CECT 5946 / M31</strain>
    </source>
</reference>
<name>NUON_SALRD</name>
<comment type="function">
    <text evidence="1">NDH-1 shuttles electrons from NADH, via FMN and iron-sulfur (Fe-S) centers, to quinones in the respiratory chain. The immediate electron acceptor for the enzyme in this species is believed to be a menaquinone. Couples the redox reaction to proton translocation (for every two electrons transferred, four hydrogen ions are translocated across the cytoplasmic membrane), and thus conserves the redox energy in a proton gradient.</text>
</comment>
<comment type="catalytic activity">
    <reaction evidence="1">
        <text>a quinone + NADH + 5 H(+)(in) = a quinol + NAD(+) + 4 H(+)(out)</text>
        <dbReference type="Rhea" id="RHEA:57888"/>
        <dbReference type="ChEBI" id="CHEBI:15378"/>
        <dbReference type="ChEBI" id="CHEBI:24646"/>
        <dbReference type="ChEBI" id="CHEBI:57540"/>
        <dbReference type="ChEBI" id="CHEBI:57945"/>
        <dbReference type="ChEBI" id="CHEBI:132124"/>
    </reaction>
</comment>
<comment type="subunit">
    <text evidence="1">NDH-1 is composed of 14 different subunits. Subunits NuoA, H, J, K, L, M, N constitute the membrane sector of the complex.</text>
</comment>
<comment type="subcellular location">
    <subcellularLocation>
        <location evidence="1">Cell inner membrane</location>
        <topology evidence="1">Multi-pass membrane protein</topology>
    </subcellularLocation>
</comment>
<comment type="similarity">
    <text evidence="1">Belongs to the complex I subunit 2 family.</text>
</comment>
<proteinExistence type="inferred from homology"/>
<feature type="chain" id="PRO_0000391220" description="NADH-quinone oxidoreductase subunit N">
    <location>
        <begin position="1"/>
        <end position="499"/>
    </location>
</feature>
<feature type="transmembrane region" description="Helical" evidence="1">
    <location>
        <begin position="16"/>
        <end position="36"/>
    </location>
</feature>
<feature type="transmembrane region" description="Helical" evidence="1">
    <location>
        <begin position="42"/>
        <end position="62"/>
    </location>
</feature>
<feature type="transmembrane region" description="Helical" evidence="1">
    <location>
        <begin position="77"/>
        <end position="97"/>
    </location>
</feature>
<feature type="transmembrane region" description="Helical" evidence="1">
    <location>
        <begin position="109"/>
        <end position="129"/>
    </location>
</feature>
<feature type="transmembrane region" description="Helical" evidence="1">
    <location>
        <begin position="133"/>
        <end position="153"/>
    </location>
</feature>
<feature type="transmembrane region" description="Helical" evidence="1">
    <location>
        <begin position="167"/>
        <end position="187"/>
    </location>
</feature>
<feature type="transmembrane region" description="Helical" evidence="1">
    <location>
        <begin position="208"/>
        <end position="228"/>
    </location>
</feature>
<feature type="transmembrane region" description="Helical" evidence="1">
    <location>
        <begin position="252"/>
        <end position="272"/>
    </location>
</feature>
<feature type="transmembrane region" description="Helical" evidence="1">
    <location>
        <begin position="274"/>
        <end position="294"/>
    </location>
</feature>
<feature type="transmembrane region" description="Helical" evidence="1">
    <location>
        <begin position="302"/>
        <end position="322"/>
    </location>
</feature>
<feature type="transmembrane region" description="Helical" evidence="1">
    <location>
        <begin position="327"/>
        <end position="347"/>
    </location>
</feature>
<feature type="transmembrane region" description="Helical" evidence="1">
    <location>
        <begin position="376"/>
        <end position="396"/>
    </location>
</feature>
<feature type="transmembrane region" description="Helical" evidence="1">
    <location>
        <begin position="411"/>
        <end position="433"/>
    </location>
</feature>
<feature type="transmembrane region" description="Helical" evidence="1">
    <location>
        <begin position="463"/>
        <end position="483"/>
    </location>
</feature>
<keyword id="KW-0997">Cell inner membrane</keyword>
<keyword id="KW-1003">Cell membrane</keyword>
<keyword id="KW-0472">Membrane</keyword>
<keyword id="KW-0520">NAD</keyword>
<keyword id="KW-0874">Quinone</keyword>
<keyword id="KW-1185">Reference proteome</keyword>
<keyword id="KW-1278">Translocase</keyword>
<keyword id="KW-0812">Transmembrane</keyword>
<keyword id="KW-1133">Transmembrane helix</keyword>
<keyword id="KW-0813">Transport</keyword>
<sequence length="499" mass="52577">MDLSTAFPTLVTDLPAAFSMSVVGGVGLAMIVLDAFRNDHPAIPWLGVAALGVSAVWEITHLGAPPSTVFFETLRTGGFVAFINLIILLTGLATILLSVPYLNQLRYDYGEVYALIMFCTVGMIMLGSANNMVSIFLGLETMSVCLYVLTGFIREDEGAVESALKYFLLGAFSTGFFLYGIALMYGATGTMALPAMAAAELGTLSTRLLFWGGFALFLVGFFFKVSAAPFHMWTPDVYQGAPTPLTGYMSTATKAAAFAALILVLVHAVPGGEWQLSVAAVAVLTMVIGNVMALAQTNVKRLLAYSSIAHAGYLLVGLSAGTSAGYAGALFYLLVYAVMNIGAFGVMSMLEWDGKEGREQTLSSLAGIANDRPVLGSTMGVFMLSLIGFPPLGGFIGKYLVFAPAVDAGLTWLVVIGVLMSALSAYYYLRVVYVFWMQSADEVAATDPVRAAAFPRATVAATGTLVVCAVALVVLGVFFGGVLETTLGFFETTAMATAP</sequence>
<gene>
    <name evidence="1" type="primary">nuoN</name>
    <name type="ordered locus">SRU_1448</name>
</gene>
<evidence type="ECO:0000255" key="1">
    <source>
        <dbReference type="HAMAP-Rule" id="MF_00445"/>
    </source>
</evidence>
<organism>
    <name type="scientific">Salinibacter ruber (strain DSM 13855 / M31)</name>
    <dbReference type="NCBI Taxonomy" id="309807"/>
    <lineage>
        <taxon>Bacteria</taxon>
        <taxon>Pseudomonadati</taxon>
        <taxon>Rhodothermota</taxon>
        <taxon>Rhodothermia</taxon>
        <taxon>Rhodothermales</taxon>
        <taxon>Salinibacteraceae</taxon>
        <taxon>Salinibacter</taxon>
    </lineage>
</organism>
<protein>
    <recommendedName>
        <fullName evidence="1">NADH-quinone oxidoreductase subunit N</fullName>
        <ecNumber evidence="1">7.1.1.-</ecNumber>
    </recommendedName>
    <alternativeName>
        <fullName evidence="1">NADH dehydrogenase I subunit N</fullName>
    </alternativeName>
    <alternativeName>
        <fullName evidence="1">NDH-1 subunit N</fullName>
    </alternativeName>
</protein>